<evidence type="ECO:0000255" key="1">
    <source>
        <dbReference type="HAMAP-Rule" id="MF_00377"/>
    </source>
</evidence>
<dbReference type="EMBL" id="FM204884">
    <property type="protein sequence ID" value="CAW97552.1"/>
    <property type="molecule type" value="Genomic_DNA"/>
</dbReference>
<dbReference type="SMR" id="C0MC62"/>
<dbReference type="KEGG" id="seq:SZO_00010"/>
<dbReference type="eggNOG" id="COG0593">
    <property type="taxonomic scope" value="Bacteria"/>
</dbReference>
<dbReference type="HOGENOM" id="CLU_026910_3_2_9"/>
<dbReference type="Proteomes" id="UP000001368">
    <property type="component" value="Chromosome"/>
</dbReference>
<dbReference type="GO" id="GO:0005737">
    <property type="term" value="C:cytoplasm"/>
    <property type="evidence" value="ECO:0007669"/>
    <property type="project" value="UniProtKB-SubCell"/>
</dbReference>
<dbReference type="GO" id="GO:0005886">
    <property type="term" value="C:plasma membrane"/>
    <property type="evidence" value="ECO:0007669"/>
    <property type="project" value="TreeGrafter"/>
</dbReference>
<dbReference type="GO" id="GO:0005524">
    <property type="term" value="F:ATP binding"/>
    <property type="evidence" value="ECO:0007669"/>
    <property type="project" value="UniProtKB-UniRule"/>
</dbReference>
<dbReference type="GO" id="GO:0016887">
    <property type="term" value="F:ATP hydrolysis activity"/>
    <property type="evidence" value="ECO:0007669"/>
    <property type="project" value="InterPro"/>
</dbReference>
<dbReference type="GO" id="GO:0003688">
    <property type="term" value="F:DNA replication origin binding"/>
    <property type="evidence" value="ECO:0007669"/>
    <property type="project" value="UniProtKB-UniRule"/>
</dbReference>
<dbReference type="GO" id="GO:0008289">
    <property type="term" value="F:lipid binding"/>
    <property type="evidence" value="ECO:0007669"/>
    <property type="project" value="UniProtKB-KW"/>
</dbReference>
<dbReference type="GO" id="GO:0006270">
    <property type="term" value="P:DNA replication initiation"/>
    <property type="evidence" value="ECO:0007669"/>
    <property type="project" value="UniProtKB-UniRule"/>
</dbReference>
<dbReference type="GO" id="GO:0006275">
    <property type="term" value="P:regulation of DNA replication"/>
    <property type="evidence" value="ECO:0007669"/>
    <property type="project" value="UniProtKB-UniRule"/>
</dbReference>
<dbReference type="CDD" id="cd00009">
    <property type="entry name" value="AAA"/>
    <property type="match status" value="1"/>
</dbReference>
<dbReference type="CDD" id="cd06571">
    <property type="entry name" value="Bac_DnaA_C"/>
    <property type="match status" value="1"/>
</dbReference>
<dbReference type="FunFam" id="1.10.1750.10:FF:000002">
    <property type="entry name" value="Chromosomal replication initiator protein DnaA"/>
    <property type="match status" value="1"/>
</dbReference>
<dbReference type="FunFam" id="3.40.50.300:FF:000668">
    <property type="entry name" value="Chromosomal replication initiator protein DnaA"/>
    <property type="match status" value="1"/>
</dbReference>
<dbReference type="Gene3D" id="1.10.1750.10">
    <property type="match status" value="1"/>
</dbReference>
<dbReference type="Gene3D" id="1.10.8.60">
    <property type="match status" value="1"/>
</dbReference>
<dbReference type="Gene3D" id="3.40.50.300">
    <property type="entry name" value="P-loop containing nucleotide triphosphate hydrolases"/>
    <property type="match status" value="1"/>
</dbReference>
<dbReference type="HAMAP" id="MF_00377">
    <property type="entry name" value="DnaA_bact"/>
    <property type="match status" value="1"/>
</dbReference>
<dbReference type="InterPro" id="IPR003593">
    <property type="entry name" value="AAA+_ATPase"/>
</dbReference>
<dbReference type="InterPro" id="IPR001957">
    <property type="entry name" value="Chromosome_initiator_DnaA"/>
</dbReference>
<dbReference type="InterPro" id="IPR020591">
    <property type="entry name" value="Chromosome_initiator_DnaA-like"/>
</dbReference>
<dbReference type="InterPro" id="IPR018312">
    <property type="entry name" value="Chromosome_initiator_DnaA_CS"/>
</dbReference>
<dbReference type="InterPro" id="IPR013159">
    <property type="entry name" value="DnaA_C"/>
</dbReference>
<dbReference type="InterPro" id="IPR013317">
    <property type="entry name" value="DnaA_dom"/>
</dbReference>
<dbReference type="InterPro" id="IPR027417">
    <property type="entry name" value="P-loop_NTPase"/>
</dbReference>
<dbReference type="InterPro" id="IPR010921">
    <property type="entry name" value="Trp_repressor/repl_initiator"/>
</dbReference>
<dbReference type="NCBIfam" id="TIGR00362">
    <property type="entry name" value="DnaA"/>
    <property type="match status" value="1"/>
</dbReference>
<dbReference type="PANTHER" id="PTHR30050">
    <property type="entry name" value="CHROMOSOMAL REPLICATION INITIATOR PROTEIN DNAA"/>
    <property type="match status" value="1"/>
</dbReference>
<dbReference type="PANTHER" id="PTHR30050:SF2">
    <property type="entry name" value="CHROMOSOMAL REPLICATION INITIATOR PROTEIN DNAA"/>
    <property type="match status" value="1"/>
</dbReference>
<dbReference type="Pfam" id="PF00308">
    <property type="entry name" value="Bac_DnaA"/>
    <property type="match status" value="1"/>
</dbReference>
<dbReference type="Pfam" id="PF08299">
    <property type="entry name" value="Bac_DnaA_C"/>
    <property type="match status" value="1"/>
</dbReference>
<dbReference type="PRINTS" id="PR00051">
    <property type="entry name" value="DNAA"/>
</dbReference>
<dbReference type="SMART" id="SM00382">
    <property type="entry name" value="AAA"/>
    <property type="match status" value="1"/>
</dbReference>
<dbReference type="SMART" id="SM00760">
    <property type="entry name" value="Bac_DnaA_C"/>
    <property type="match status" value="1"/>
</dbReference>
<dbReference type="SUPFAM" id="SSF52540">
    <property type="entry name" value="P-loop containing nucleoside triphosphate hydrolases"/>
    <property type="match status" value="1"/>
</dbReference>
<dbReference type="SUPFAM" id="SSF48295">
    <property type="entry name" value="TrpR-like"/>
    <property type="match status" value="1"/>
</dbReference>
<dbReference type="PROSITE" id="PS01008">
    <property type="entry name" value="DNAA"/>
    <property type="match status" value="1"/>
</dbReference>
<accession>C0MC62</accession>
<feature type="chain" id="PRO_1000205663" description="Chromosomal replication initiator protein DnaA">
    <location>
        <begin position="1"/>
        <end position="450"/>
    </location>
</feature>
<feature type="region of interest" description="Domain I, interacts with DnaA modulators" evidence="1">
    <location>
        <begin position="1"/>
        <end position="84"/>
    </location>
</feature>
<feature type="region of interest" description="Domain II" evidence="1">
    <location>
        <begin position="84"/>
        <end position="109"/>
    </location>
</feature>
<feature type="region of interest" description="Domain III, AAA+ region" evidence="1">
    <location>
        <begin position="110"/>
        <end position="328"/>
    </location>
</feature>
<feature type="region of interest" description="Domain IV, binds dsDNA" evidence="1">
    <location>
        <begin position="329"/>
        <end position="450"/>
    </location>
</feature>
<feature type="binding site" evidence="1">
    <location>
        <position position="154"/>
    </location>
    <ligand>
        <name>ATP</name>
        <dbReference type="ChEBI" id="CHEBI:30616"/>
    </ligand>
</feature>
<feature type="binding site" evidence="1">
    <location>
        <position position="156"/>
    </location>
    <ligand>
        <name>ATP</name>
        <dbReference type="ChEBI" id="CHEBI:30616"/>
    </ligand>
</feature>
<feature type="binding site" evidence="1">
    <location>
        <position position="157"/>
    </location>
    <ligand>
        <name>ATP</name>
        <dbReference type="ChEBI" id="CHEBI:30616"/>
    </ligand>
</feature>
<feature type="binding site" evidence="1">
    <location>
        <position position="158"/>
    </location>
    <ligand>
        <name>ATP</name>
        <dbReference type="ChEBI" id="CHEBI:30616"/>
    </ligand>
</feature>
<name>DNAA_STRS7</name>
<protein>
    <recommendedName>
        <fullName evidence="1">Chromosomal replication initiator protein DnaA</fullName>
    </recommendedName>
</protein>
<keyword id="KW-0067">ATP-binding</keyword>
<keyword id="KW-0963">Cytoplasm</keyword>
<keyword id="KW-0235">DNA replication</keyword>
<keyword id="KW-0238">DNA-binding</keyword>
<keyword id="KW-0446">Lipid-binding</keyword>
<keyword id="KW-0547">Nucleotide-binding</keyword>
<organism>
    <name type="scientific">Streptococcus equi subsp. zooepidemicus (strain H70)</name>
    <dbReference type="NCBI Taxonomy" id="553483"/>
    <lineage>
        <taxon>Bacteria</taxon>
        <taxon>Bacillati</taxon>
        <taxon>Bacillota</taxon>
        <taxon>Bacilli</taxon>
        <taxon>Lactobacillales</taxon>
        <taxon>Streptococcaceae</taxon>
        <taxon>Streptococcus</taxon>
    </lineage>
</organism>
<comment type="function">
    <text evidence="1">Plays an essential role in the initiation and regulation of chromosomal replication. ATP-DnaA binds to the origin of replication (oriC) to initiate formation of the DNA replication initiation complex once per cell cycle. Binds the DnaA box (a 9 base pair repeat at the origin) and separates the double-stranded (ds)DNA. Forms a right-handed helical filament on oriC DNA; dsDNA binds to the exterior of the filament while single-stranded (ss)DNA is stabiized in the filament's interior. The ATP-DnaA-oriC complex binds and stabilizes one strand of the AT-rich DNA unwinding element (DUE), permitting loading of DNA polymerase. After initiation quickly degrades to an ADP-DnaA complex that is not apt for DNA replication. Binds acidic phospholipids.</text>
</comment>
<comment type="subunit">
    <text evidence="1">Oligomerizes as a right-handed, spiral filament on DNA at oriC.</text>
</comment>
<comment type="subcellular location">
    <subcellularLocation>
        <location evidence="1">Cytoplasm</location>
    </subcellularLocation>
</comment>
<comment type="domain">
    <text evidence="1">Domain I is involved in oligomerization and binding regulators, domain II is flexibile and of varying length in different bacteria, domain III forms the AAA+ region, while domain IV binds dsDNA.</text>
</comment>
<comment type="similarity">
    <text evidence="1">Belongs to the DnaA family.</text>
</comment>
<sequence length="450" mass="51480">MTENEQIFWNRVLELAQSQLKQATYEFFVHDARLIKVDNHVATIFLDQMKELFWEKNLKDVILTAGFEVYNAQIAVDYVYEDNLMIEQQHQGQQGYTEQAFQQLPAVQSDLNPKYSFDNFIQGDENRWAVAASIAVANTPGTTYNPLFIWGGPGLGKTHLLNAIGNSVLLENPNARIKYITAENFINEFVVHIRLDTMDELKEKFRNLDLLLIDDIQSLAKKTLSGTQEEFFNTFNALHNNNKQIVLTSDRTPDHLNDLEDRLVTRFKWGLTVNITPPDFETRVAILTNKIQEYNFVFPQDTIEYLAGQFDSNVRDLEGALKDISLVANFKQIDTITVDIAAEAIRARKQDGPKMTVIPIEEIQAQVGKFYGVTVKEIKATKRTQDIVLARQVAMFLAREMTDNSLPKIGKEFGGRDHSTVLHAYNKIKNMIGQDESLRIEIETIKNKIK</sequence>
<gene>
    <name evidence="1" type="primary">dnaA</name>
    <name type="ordered locus">SZO_00010</name>
</gene>
<reference key="1">
    <citation type="journal article" date="2009" name="PLoS Pathog.">
        <title>Genomic evidence for the evolution of Streptococcus equi: host restriction, increased virulence, and genetic exchange with human pathogens.</title>
        <authorList>
            <person name="Holden M.T.G."/>
            <person name="Heather Z."/>
            <person name="Paillot R."/>
            <person name="Steward K.F."/>
            <person name="Webb K."/>
            <person name="Ainslie F."/>
            <person name="Jourdan T."/>
            <person name="Bason N.C."/>
            <person name="Holroyd N.E."/>
            <person name="Mungall K."/>
            <person name="Quail M.A."/>
            <person name="Sanders M."/>
            <person name="Simmonds M."/>
            <person name="Willey D."/>
            <person name="Brooks K."/>
            <person name="Aanensen D.M."/>
            <person name="Spratt B.G."/>
            <person name="Jolley K.A."/>
            <person name="Maiden M.C.J."/>
            <person name="Kehoe M."/>
            <person name="Chanter N."/>
            <person name="Bentley S.D."/>
            <person name="Robinson C."/>
            <person name="Maskell D.J."/>
            <person name="Parkhill J."/>
            <person name="Waller A.S."/>
        </authorList>
    </citation>
    <scope>NUCLEOTIDE SEQUENCE [LARGE SCALE GENOMIC DNA]</scope>
    <source>
        <strain>H70</strain>
    </source>
</reference>
<proteinExistence type="inferred from homology"/>